<name>ACDH1_PSEP1</name>
<proteinExistence type="inferred from homology"/>
<accession>A5W4E5</accession>
<comment type="catalytic activity">
    <reaction evidence="1">
        <text>acetaldehyde + NAD(+) + CoA = acetyl-CoA + NADH + H(+)</text>
        <dbReference type="Rhea" id="RHEA:23288"/>
        <dbReference type="ChEBI" id="CHEBI:15343"/>
        <dbReference type="ChEBI" id="CHEBI:15378"/>
        <dbReference type="ChEBI" id="CHEBI:57287"/>
        <dbReference type="ChEBI" id="CHEBI:57288"/>
        <dbReference type="ChEBI" id="CHEBI:57540"/>
        <dbReference type="ChEBI" id="CHEBI:57945"/>
        <dbReference type="EC" id="1.2.1.10"/>
    </reaction>
</comment>
<comment type="similarity">
    <text evidence="1">Belongs to the acetaldehyde dehydrogenase family.</text>
</comment>
<evidence type="ECO:0000255" key="1">
    <source>
        <dbReference type="HAMAP-Rule" id="MF_01657"/>
    </source>
</evidence>
<dbReference type="EC" id="1.2.1.10" evidence="1"/>
<dbReference type="EMBL" id="CP000712">
    <property type="protein sequence ID" value="ABQ79005.1"/>
    <property type="molecule type" value="Genomic_DNA"/>
</dbReference>
<dbReference type="SMR" id="A5W4E5"/>
<dbReference type="KEGG" id="ppf:Pput_2874"/>
<dbReference type="eggNOG" id="COG4569">
    <property type="taxonomic scope" value="Bacteria"/>
</dbReference>
<dbReference type="HOGENOM" id="CLU_062208_0_0_6"/>
<dbReference type="GO" id="GO:0008774">
    <property type="term" value="F:acetaldehyde dehydrogenase (acetylating) activity"/>
    <property type="evidence" value="ECO:0007669"/>
    <property type="project" value="UniProtKB-UniRule"/>
</dbReference>
<dbReference type="GO" id="GO:0051287">
    <property type="term" value="F:NAD binding"/>
    <property type="evidence" value="ECO:0007669"/>
    <property type="project" value="UniProtKB-UniRule"/>
</dbReference>
<dbReference type="GO" id="GO:0009056">
    <property type="term" value="P:catabolic process"/>
    <property type="evidence" value="ECO:0007669"/>
    <property type="project" value="UniProtKB-KW"/>
</dbReference>
<dbReference type="CDD" id="cd23933">
    <property type="entry name" value="ALDH_C"/>
    <property type="match status" value="1"/>
</dbReference>
<dbReference type="Gene3D" id="3.30.360.10">
    <property type="entry name" value="Dihydrodipicolinate Reductase, domain 2"/>
    <property type="match status" value="1"/>
</dbReference>
<dbReference type="Gene3D" id="3.40.50.720">
    <property type="entry name" value="NAD(P)-binding Rossmann-like Domain"/>
    <property type="match status" value="1"/>
</dbReference>
<dbReference type="HAMAP" id="MF_01657">
    <property type="entry name" value="Ac_ald_DH_ac"/>
    <property type="match status" value="1"/>
</dbReference>
<dbReference type="InterPro" id="IPR003361">
    <property type="entry name" value="Acetaldehyde_dehydrogenase"/>
</dbReference>
<dbReference type="InterPro" id="IPR015426">
    <property type="entry name" value="Acetylaldehyde_DH_C"/>
</dbReference>
<dbReference type="InterPro" id="IPR036291">
    <property type="entry name" value="NAD(P)-bd_dom_sf"/>
</dbReference>
<dbReference type="InterPro" id="IPR000534">
    <property type="entry name" value="Semialdehyde_DH_NAD-bd"/>
</dbReference>
<dbReference type="NCBIfam" id="TIGR03215">
    <property type="entry name" value="ac_ald_DH_ac"/>
    <property type="match status" value="1"/>
</dbReference>
<dbReference type="NCBIfam" id="NF006157">
    <property type="entry name" value="PRK08300.1"/>
    <property type="match status" value="1"/>
</dbReference>
<dbReference type="Pfam" id="PF09290">
    <property type="entry name" value="AcetDehyd-dimer"/>
    <property type="match status" value="1"/>
</dbReference>
<dbReference type="Pfam" id="PF01118">
    <property type="entry name" value="Semialdhyde_dh"/>
    <property type="match status" value="1"/>
</dbReference>
<dbReference type="PIRSF" id="PIRSF015689">
    <property type="entry name" value="Actaldh_dh_actl"/>
    <property type="match status" value="1"/>
</dbReference>
<dbReference type="SMART" id="SM00859">
    <property type="entry name" value="Semialdhyde_dh"/>
    <property type="match status" value="1"/>
</dbReference>
<dbReference type="SUPFAM" id="SSF55347">
    <property type="entry name" value="Glyceraldehyde-3-phosphate dehydrogenase-like, C-terminal domain"/>
    <property type="match status" value="1"/>
</dbReference>
<dbReference type="SUPFAM" id="SSF51735">
    <property type="entry name" value="NAD(P)-binding Rossmann-fold domains"/>
    <property type="match status" value="1"/>
</dbReference>
<organism>
    <name type="scientific">Pseudomonas putida (strain ATCC 700007 / DSM 6899 / JCM 31910 / BCRC 17059 / LMG 24140 / F1)</name>
    <dbReference type="NCBI Taxonomy" id="351746"/>
    <lineage>
        <taxon>Bacteria</taxon>
        <taxon>Pseudomonadati</taxon>
        <taxon>Pseudomonadota</taxon>
        <taxon>Gammaproteobacteria</taxon>
        <taxon>Pseudomonadales</taxon>
        <taxon>Pseudomonadaceae</taxon>
        <taxon>Pseudomonas</taxon>
    </lineage>
</organism>
<keyword id="KW-0058">Aromatic hydrocarbons catabolism</keyword>
<keyword id="KW-0520">NAD</keyword>
<keyword id="KW-0560">Oxidoreductase</keyword>
<protein>
    <recommendedName>
        <fullName evidence="1">Acetaldehyde dehydrogenase 1</fullName>
        <ecNumber evidence="1">1.2.1.10</ecNumber>
    </recommendedName>
    <alternativeName>
        <fullName evidence="1">Acetaldehyde dehydrogenase [acetylating] 1</fullName>
    </alternativeName>
</protein>
<sequence>MTRKVKAAIIGSGNIGTDLMIKILRHGQHIEMGAMVGIDPASDGLARAQRMGVAITHEGVEGLTRLPVFNEIDVVFDATSAGAHVKNEALLRERKPGLRMIDLTPAAIGPYCIPVVNGDDHLDATNVNMVTCGGQATIPMVAAVSRVAKVHYAEIIASISSKSAGPGTRANIDEFTETTSKAIEVVGGAAKGKAIIVLNPAEPPLMMRDTVYTLSDFADIDQIEESVQRMADAVQAYVPGYRLKQRVQFDRIEADCPIRIPGVGDRMNGLKTSIFLEVEGAAHYLPAYAGNLDIMTSAALRTAEKLAERLLASLVA</sequence>
<gene>
    <name type="ordered locus">Pput_2874</name>
</gene>
<reference key="1">
    <citation type="submission" date="2007-05" db="EMBL/GenBank/DDBJ databases">
        <title>Complete sequence of Pseudomonas putida F1.</title>
        <authorList>
            <consortium name="US DOE Joint Genome Institute"/>
            <person name="Copeland A."/>
            <person name="Lucas S."/>
            <person name="Lapidus A."/>
            <person name="Barry K."/>
            <person name="Detter J.C."/>
            <person name="Glavina del Rio T."/>
            <person name="Hammon N."/>
            <person name="Israni S."/>
            <person name="Dalin E."/>
            <person name="Tice H."/>
            <person name="Pitluck S."/>
            <person name="Chain P."/>
            <person name="Malfatti S."/>
            <person name="Shin M."/>
            <person name="Vergez L."/>
            <person name="Schmutz J."/>
            <person name="Larimer F."/>
            <person name="Land M."/>
            <person name="Hauser L."/>
            <person name="Kyrpides N."/>
            <person name="Lykidis A."/>
            <person name="Parales R."/>
            <person name="Richardson P."/>
        </authorList>
    </citation>
    <scope>NUCLEOTIDE SEQUENCE [LARGE SCALE GENOMIC DNA]</scope>
    <source>
        <strain>ATCC 700007 / DSM 6899 / JCM 31910 / BCRC 17059 / LMG 24140 / F1</strain>
    </source>
</reference>
<feature type="chain" id="PRO_1000187038" description="Acetaldehyde dehydrogenase 1">
    <location>
        <begin position="1"/>
        <end position="316"/>
    </location>
</feature>
<feature type="active site" description="Acyl-thioester intermediate" evidence="1">
    <location>
        <position position="132"/>
    </location>
</feature>
<feature type="binding site" evidence="1">
    <location>
        <begin position="12"/>
        <end position="15"/>
    </location>
    <ligand>
        <name>NAD(+)</name>
        <dbReference type="ChEBI" id="CHEBI:57540"/>
    </ligand>
</feature>
<feature type="binding site" evidence="1">
    <location>
        <begin position="163"/>
        <end position="171"/>
    </location>
    <ligand>
        <name>NAD(+)</name>
        <dbReference type="ChEBI" id="CHEBI:57540"/>
    </ligand>
</feature>
<feature type="binding site" evidence="1">
    <location>
        <position position="291"/>
    </location>
    <ligand>
        <name>NAD(+)</name>
        <dbReference type="ChEBI" id="CHEBI:57540"/>
    </ligand>
</feature>